<name>PPK4_DERER</name>
<feature type="peptide" id="PRO_0000044328" description="Pyrokinin-4">
    <location>
        <begin position="1"/>
        <end position="12"/>
    </location>
</feature>
<feature type="modified residue" description="Leucine amide" evidence="3">
    <location>
        <position position="12"/>
    </location>
</feature>
<sequence>DHLPHDVYSPRL</sequence>
<protein>
    <recommendedName>
        <fullName>Pyrokinin-4</fullName>
    </recommendedName>
    <alternativeName>
        <fullName>YXPRL-amide</fullName>
    </alternativeName>
</protein>
<proteinExistence type="evidence at protein level"/>
<dbReference type="GO" id="GO:0005576">
    <property type="term" value="C:extracellular region"/>
    <property type="evidence" value="ECO:0007669"/>
    <property type="project" value="UniProtKB-SubCell"/>
</dbReference>
<dbReference type="GO" id="GO:0007218">
    <property type="term" value="P:neuropeptide signaling pathway"/>
    <property type="evidence" value="ECO:0007669"/>
    <property type="project" value="UniProtKB-KW"/>
</dbReference>
<evidence type="ECO:0000250" key="1">
    <source>
        <dbReference type="UniProtKB" id="P82619"/>
    </source>
</evidence>
<evidence type="ECO:0000255" key="2"/>
<evidence type="ECO:0000269" key="3">
    <source>
    </source>
</evidence>
<evidence type="ECO:0000305" key="4"/>
<keyword id="KW-0027">Amidation</keyword>
<keyword id="KW-0903">Direct protein sequencing</keyword>
<keyword id="KW-0527">Neuropeptide</keyword>
<keyword id="KW-0964">Secreted</keyword>
<reference evidence="4" key="1">
    <citation type="journal article" date="2005" name="Peptides">
        <title>Peptidomics of neurohemal organs from species of the cockroach family Blattidae: how do neuropeptides of closely related species differ?</title>
        <authorList>
            <person name="Predel R."/>
            <person name="Gaede G."/>
        </authorList>
    </citation>
    <scope>PROTEIN SEQUENCE</scope>
    <scope>MASS SPECTROMETRY</scope>
    <scope>AMIDATION AT LEU-12</scope>
    <source>
        <tissue evidence="3">Corpora allata</tissue>
    </source>
</reference>
<accession>P84414</accession>
<comment type="function">
    <text evidence="1">Mediates visceral muscle contractile activity (myotropic activity).</text>
</comment>
<comment type="subcellular location">
    <subcellularLocation>
        <location evidence="4">Secreted</location>
    </subcellularLocation>
</comment>
<comment type="mass spectrometry"/>
<comment type="similarity">
    <text evidence="2">Belongs to the pyrokinin family.</text>
</comment>
<organism>
    <name type="scientific">Deropeltis erythrocephala</name>
    <name type="common">Black velvet roach</name>
    <dbReference type="NCBI Taxonomy" id="303918"/>
    <lineage>
        <taxon>Eukaryota</taxon>
        <taxon>Metazoa</taxon>
        <taxon>Ecdysozoa</taxon>
        <taxon>Arthropoda</taxon>
        <taxon>Hexapoda</taxon>
        <taxon>Insecta</taxon>
        <taxon>Pterygota</taxon>
        <taxon>Neoptera</taxon>
        <taxon>Polyneoptera</taxon>
        <taxon>Dictyoptera</taxon>
        <taxon>Blattodea</taxon>
        <taxon>Blattoidea</taxon>
        <taxon>Blattidae</taxon>
        <taxon>Blattinae</taxon>
        <taxon>Deropeltis</taxon>
    </lineage>
</organism>